<organism>
    <name type="scientific">Picosynechococcus sp. (strain ATCC 27264 / PCC 7002 / PR-6)</name>
    <name type="common">Agmenellum quadruplicatum</name>
    <dbReference type="NCBI Taxonomy" id="32049"/>
    <lineage>
        <taxon>Bacteria</taxon>
        <taxon>Bacillati</taxon>
        <taxon>Cyanobacteriota</taxon>
        <taxon>Cyanophyceae</taxon>
        <taxon>Oscillatoriophycideae</taxon>
        <taxon>Chroococcales</taxon>
        <taxon>Geminocystaceae</taxon>
        <taxon>Picosynechococcus</taxon>
    </lineage>
</organism>
<name>TRHO_PICP2</name>
<dbReference type="EC" id="1.14.-.-" evidence="1"/>
<dbReference type="EMBL" id="CP000951">
    <property type="protein sequence ID" value="ACA99487.1"/>
    <property type="molecule type" value="Genomic_DNA"/>
</dbReference>
<dbReference type="RefSeq" id="WP_012307110.1">
    <property type="nucleotide sequence ID" value="NZ_JAHHPU010000007.1"/>
</dbReference>
<dbReference type="SMR" id="B1XN07"/>
<dbReference type="STRING" id="32049.SYNPCC7002_A1496"/>
<dbReference type="KEGG" id="syp:SYNPCC7002_A1496"/>
<dbReference type="eggNOG" id="COG1054">
    <property type="taxonomic scope" value="Bacteria"/>
</dbReference>
<dbReference type="HOGENOM" id="CLU_038878_0_0_3"/>
<dbReference type="Proteomes" id="UP000001688">
    <property type="component" value="Chromosome"/>
</dbReference>
<dbReference type="GO" id="GO:0016705">
    <property type="term" value="F:oxidoreductase activity, acting on paired donors, with incorporation or reduction of molecular oxygen"/>
    <property type="evidence" value="ECO:0007669"/>
    <property type="project" value="UniProtKB-UniRule"/>
</dbReference>
<dbReference type="GO" id="GO:0006400">
    <property type="term" value="P:tRNA modification"/>
    <property type="evidence" value="ECO:0007669"/>
    <property type="project" value="UniProtKB-UniRule"/>
</dbReference>
<dbReference type="CDD" id="cd01518">
    <property type="entry name" value="RHOD_YceA"/>
    <property type="match status" value="1"/>
</dbReference>
<dbReference type="Gene3D" id="3.30.70.100">
    <property type="match status" value="1"/>
</dbReference>
<dbReference type="Gene3D" id="3.40.250.10">
    <property type="entry name" value="Rhodanese-like domain"/>
    <property type="match status" value="1"/>
</dbReference>
<dbReference type="HAMAP" id="MF_00469">
    <property type="entry name" value="TrhO"/>
    <property type="match status" value="1"/>
</dbReference>
<dbReference type="InterPro" id="IPR001763">
    <property type="entry name" value="Rhodanese-like_dom"/>
</dbReference>
<dbReference type="InterPro" id="IPR036873">
    <property type="entry name" value="Rhodanese-like_dom_sf"/>
</dbReference>
<dbReference type="InterPro" id="IPR020936">
    <property type="entry name" value="TrhO"/>
</dbReference>
<dbReference type="InterPro" id="IPR040503">
    <property type="entry name" value="TRHO_N"/>
</dbReference>
<dbReference type="NCBIfam" id="NF001136">
    <property type="entry name" value="PRK00142.1-4"/>
    <property type="match status" value="1"/>
</dbReference>
<dbReference type="PANTHER" id="PTHR43268:SF3">
    <property type="entry name" value="RHODANESE-LIKE DOMAIN-CONTAINING PROTEIN 7-RELATED"/>
    <property type="match status" value="1"/>
</dbReference>
<dbReference type="PANTHER" id="PTHR43268">
    <property type="entry name" value="THIOSULFATE SULFURTRANSFERASE/RHODANESE-LIKE DOMAIN-CONTAINING PROTEIN 2"/>
    <property type="match status" value="1"/>
</dbReference>
<dbReference type="Pfam" id="PF00581">
    <property type="entry name" value="Rhodanese"/>
    <property type="match status" value="1"/>
</dbReference>
<dbReference type="Pfam" id="PF17773">
    <property type="entry name" value="UPF0176_N"/>
    <property type="match status" value="1"/>
</dbReference>
<dbReference type="SMART" id="SM00450">
    <property type="entry name" value="RHOD"/>
    <property type="match status" value="1"/>
</dbReference>
<dbReference type="SUPFAM" id="SSF52821">
    <property type="entry name" value="Rhodanese/Cell cycle control phosphatase"/>
    <property type="match status" value="1"/>
</dbReference>
<dbReference type="PROSITE" id="PS50206">
    <property type="entry name" value="RHODANESE_3"/>
    <property type="match status" value="1"/>
</dbReference>
<comment type="function">
    <text evidence="1">Catalyzes oxygen-dependent 5-hydroxyuridine (ho5U) modification at position 34 in tRNAs.</text>
</comment>
<comment type="catalytic activity">
    <reaction evidence="1">
        <text>uridine(34) in tRNA + AH2 + O2 = 5-hydroxyuridine(34) in tRNA + A + H2O</text>
        <dbReference type="Rhea" id="RHEA:64224"/>
        <dbReference type="Rhea" id="RHEA-COMP:11727"/>
        <dbReference type="Rhea" id="RHEA-COMP:13381"/>
        <dbReference type="ChEBI" id="CHEBI:13193"/>
        <dbReference type="ChEBI" id="CHEBI:15377"/>
        <dbReference type="ChEBI" id="CHEBI:15379"/>
        <dbReference type="ChEBI" id="CHEBI:17499"/>
        <dbReference type="ChEBI" id="CHEBI:65315"/>
        <dbReference type="ChEBI" id="CHEBI:136877"/>
    </reaction>
</comment>
<comment type="similarity">
    <text evidence="1">Belongs to the TrhO family.</text>
</comment>
<sequence>MKDFVVITFYKFFDFPDYKERQQPIFNFADEQKIIGTILLAHEGINATIAGTQTALDAMVNFLHQDPRLADLTYKVSTAPKQPFKRLKVKLKQEIVTLGQPNVDPNNTVGTYIDPKDWNDLIQNPDVTLVDTRNDYEVGIGTFKGAINPNTKSFREFPDYVAENLDPQKNAKVAMFCTGGIRCEKATSYLLNQGFQEVYHLKGGILKYLEEIPVAESLWEGECFVFDERVTVKHGLETGHYELCYACGHPIDAEDKTSAAYEIGVSCPYCIEALTPERRSRFEAKWQQRQQMKACQAS</sequence>
<feature type="chain" id="PRO_1000200385" description="tRNA uridine(34) hydroxylase">
    <location>
        <begin position="1"/>
        <end position="298"/>
    </location>
</feature>
<feature type="domain" description="Rhodanese" evidence="1">
    <location>
        <begin position="123"/>
        <end position="217"/>
    </location>
</feature>
<feature type="active site" description="Cysteine persulfide intermediate" evidence="1">
    <location>
        <position position="177"/>
    </location>
</feature>
<evidence type="ECO:0000255" key="1">
    <source>
        <dbReference type="HAMAP-Rule" id="MF_00469"/>
    </source>
</evidence>
<proteinExistence type="inferred from homology"/>
<keyword id="KW-0560">Oxidoreductase</keyword>
<keyword id="KW-1185">Reference proteome</keyword>
<keyword id="KW-0819">tRNA processing</keyword>
<protein>
    <recommendedName>
        <fullName evidence="1">tRNA uridine(34) hydroxylase</fullName>
        <ecNumber evidence="1">1.14.-.-</ecNumber>
    </recommendedName>
    <alternativeName>
        <fullName evidence="1">tRNA hydroxylation protein O</fullName>
    </alternativeName>
</protein>
<accession>B1XN07</accession>
<reference key="1">
    <citation type="submission" date="2008-02" db="EMBL/GenBank/DDBJ databases">
        <title>Complete sequence of Synechococcus sp. PCC 7002.</title>
        <authorList>
            <person name="Li T."/>
            <person name="Zhao J."/>
            <person name="Zhao C."/>
            <person name="Liu Z."/>
            <person name="Zhao F."/>
            <person name="Marquardt J."/>
            <person name="Nomura C.T."/>
            <person name="Persson S."/>
            <person name="Detter J.C."/>
            <person name="Richardson P.M."/>
            <person name="Lanz C."/>
            <person name="Schuster S.C."/>
            <person name="Wang J."/>
            <person name="Li S."/>
            <person name="Huang X."/>
            <person name="Cai T."/>
            <person name="Yu Z."/>
            <person name="Luo J."/>
            <person name="Zhao J."/>
            <person name="Bryant D.A."/>
        </authorList>
    </citation>
    <scope>NUCLEOTIDE SEQUENCE [LARGE SCALE GENOMIC DNA]</scope>
    <source>
        <strain>ATCC 27264 / PCC 7002 / PR-6</strain>
    </source>
</reference>
<gene>
    <name evidence="1" type="primary">trhO</name>
    <name type="ordered locus">SYNPCC7002_A1496</name>
</gene>